<reference key="1">
    <citation type="journal article" date="2002" name="Proc. Natl. Acad. Sci. U.S.A.">
        <title>Extensive mosaic structure revealed by the complete genome sequence of uropathogenic Escherichia coli.</title>
        <authorList>
            <person name="Welch R.A."/>
            <person name="Burland V."/>
            <person name="Plunkett G. III"/>
            <person name="Redford P."/>
            <person name="Roesch P."/>
            <person name="Rasko D."/>
            <person name="Buckles E.L."/>
            <person name="Liou S.-R."/>
            <person name="Boutin A."/>
            <person name="Hackett J."/>
            <person name="Stroud D."/>
            <person name="Mayhew G.F."/>
            <person name="Rose D.J."/>
            <person name="Zhou S."/>
            <person name="Schwartz D.C."/>
            <person name="Perna N.T."/>
            <person name="Mobley H.L.T."/>
            <person name="Donnenberg M.S."/>
            <person name="Blattner F.R."/>
        </authorList>
    </citation>
    <scope>NUCLEOTIDE SEQUENCE [LARGE SCALE GENOMIC DNA]</scope>
    <source>
        <strain>CFT073 / ATCC 700928 / UPEC</strain>
    </source>
</reference>
<keyword id="KW-0032">Aminotransferase</keyword>
<keyword id="KW-1185">Reference proteome</keyword>
<keyword id="KW-0808">Transferase</keyword>
<comment type="function">
    <text evidence="1">The glycine cleavage system catalyzes the degradation of glycine.</text>
</comment>
<comment type="catalytic activity">
    <reaction evidence="1">
        <text>N(6)-[(R)-S(8)-aminomethyldihydrolipoyl]-L-lysyl-[protein] + (6S)-5,6,7,8-tetrahydrofolate = N(6)-[(R)-dihydrolipoyl]-L-lysyl-[protein] + (6R)-5,10-methylene-5,6,7,8-tetrahydrofolate + NH4(+)</text>
        <dbReference type="Rhea" id="RHEA:16945"/>
        <dbReference type="Rhea" id="RHEA-COMP:10475"/>
        <dbReference type="Rhea" id="RHEA-COMP:10492"/>
        <dbReference type="ChEBI" id="CHEBI:15636"/>
        <dbReference type="ChEBI" id="CHEBI:28938"/>
        <dbReference type="ChEBI" id="CHEBI:57453"/>
        <dbReference type="ChEBI" id="CHEBI:83100"/>
        <dbReference type="ChEBI" id="CHEBI:83143"/>
        <dbReference type="EC" id="2.1.2.10"/>
    </reaction>
</comment>
<comment type="subunit">
    <text evidence="1">The glycine cleavage system is composed of four proteins: P, T, L and H.</text>
</comment>
<comment type="similarity">
    <text evidence="1">Belongs to the GcvT family.</text>
</comment>
<evidence type="ECO:0000255" key="1">
    <source>
        <dbReference type="HAMAP-Rule" id="MF_00259"/>
    </source>
</evidence>
<dbReference type="EC" id="2.1.2.10" evidence="1"/>
<dbReference type="EMBL" id="AE014075">
    <property type="protein sequence ID" value="AAN81933.1"/>
    <property type="molecule type" value="Genomic_DNA"/>
</dbReference>
<dbReference type="RefSeq" id="WP_000068690.1">
    <property type="nucleotide sequence ID" value="NZ_CP051263.1"/>
</dbReference>
<dbReference type="SMR" id="Q8FE65"/>
<dbReference type="STRING" id="199310.c3485"/>
<dbReference type="KEGG" id="ecc:c3485"/>
<dbReference type="eggNOG" id="COG0404">
    <property type="taxonomic scope" value="Bacteria"/>
</dbReference>
<dbReference type="HOGENOM" id="CLU_007884_10_2_6"/>
<dbReference type="BioCyc" id="ECOL199310:C3485-MONOMER"/>
<dbReference type="Proteomes" id="UP000001410">
    <property type="component" value="Chromosome"/>
</dbReference>
<dbReference type="GO" id="GO:0005829">
    <property type="term" value="C:cytosol"/>
    <property type="evidence" value="ECO:0007669"/>
    <property type="project" value="TreeGrafter"/>
</dbReference>
<dbReference type="GO" id="GO:0005960">
    <property type="term" value="C:glycine cleavage complex"/>
    <property type="evidence" value="ECO:0007669"/>
    <property type="project" value="InterPro"/>
</dbReference>
<dbReference type="GO" id="GO:0004047">
    <property type="term" value="F:aminomethyltransferase activity"/>
    <property type="evidence" value="ECO:0007669"/>
    <property type="project" value="UniProtKB-UniRule"/>
</dbReference>
<dbReference type="GO" id="GO:0008483">
    <property type="term" value="F:transaminase activity"/>
    <property type="evidence" value="ECO:0007669"/>
    <property type="project" value="UniProtKB-KW"/>
</dbReference>
<dbReference type="GO" id="GO:0019464">
    <property type="term" value="P:glycine decarboxylation via glycine cleavage system"/>
    <property type="evidence" value="ECO:0007669"/>
    <property type="project" value="UniProtKB-UniRule"/>
</dbReference>
<dbReference type="FunFam" id="2.40.30.110:FF:000001">
    <property type="entry name" value="Aminomethyltransferase"/>
    <property type="match status" value="1"/>
</dbReference>
<dbReference type="FunFam" id="3.30.70.1400:FF:000001">
    <property type="entry name" value="Aminomethyltransferase"/>
    <property type="match status" value="1"/>
</dbReference>
<dbReference type="FunFam" id="4.10.1250.10:FF:000001">
    <property type="entry name" value="Aminomethyltransferase"/>
    <property type="match status" value="1"/>
</dbReference>
<dbReference type="Gene3D" id="2.40.30.110">
    <property type="entry name" value="Aminomethyltransferase beta-barrel domains"/>
    <property type="match status" value="1"/>
</dbReference>
<dbReference type="Gene3D" id="3.30.70.1400">
    <property type="entry name" value="Aminomethyltransferase beta-barrel domains"/>
    <property type="match status" value="1"/>
</dbReference>
<dbReference type="Gene3D" id="4.10.1250.10">
    <property type="entry name" value="Aminomethyltransferase fragment"/>
    <property type="match status" value="1"/>
</dbReference>
<dbReference type="Gene3D" id="3.30.1360.120">
    <property type="entry name" value="Probable tRNA modification gtpase trme, domain 1"/>
    <property type="match status" value="1"/>
</dbReference>
<dbReference type="HAMAP" id="MF_00259">
    <property type="entry name" value="GcvT"/>
    <property type="match status" value="1"/>
</dbReference>
<dbReference type="InterPro" id="IPR006223">
    <property type="entry name" value="GCS_T"/>
</dbReference>
<dbReference type="InterPro" id="IPR022903">
    <property type="entry name" value="GCS_T_bac"/>
</dbReference>
<dbReference type="InterPro" id="IPR013977">
    <property type="entry name" value="GCST_C"/>
</dbReference>
<dbReference type="InterPro" id="IPR006222">
    <property type="entry name" value="GCV_T_N"/>
</dbReference>
<dbReference type="InterPro" id="IPR028896">
    <property type="entry name" value="GcvT/YgfZ/DmdA"/>
</dbReference>
<dbReference type="InterPro" id="IPR029043">
    <property type="entry name" value="GcvT/YgfZ_C"/>
</dbReference>
<dbReference type="InterPro" id="IPR027266">
    <property type="entry name" value="TrmE/GcvT_dom1"/>
</dbReference>
<dbReference type="NCBIfam" id="TIGR00528">
    <property type="entry name" value="gcvT"/>
    <property type="match status" value="1"/>
</dbReference>
<dbReference type="NCBIfam" id="NF001567">
    <property type="entry name" value="PRK00389.1"/>
    <property type="match status" value="1"/>
</dbReference>
<dbReference type="PANTHER" id="PTHR43757">
    <property type="entry name" value="AMINOMETHYLTRANSFERASE"/>
    <property type="match status" value="1"/>
</dbReference>
<dbReference type="PANTHER" id="PTHR43757:SF2">
    <property type="entry name" value="AMINOMETHYLTRANSFERASE, MITOCHONDRIAL"/>
    <property type="match status" value="1"/>
</dbReference>
<dbReference type="Pfam" id="PF01571">
    <property type="entry name" value="GCV_T"/>
    <property type="match status" value="1"/>
</dbReference>
<dbReference type="Pfam" id="PF08669">
    <property type="entry name" value="GCV_T_C"/>
    <property type="match status" value="1"/>
</dbReference>
<dbReference type="PIRSF" id="PIRSF006487">
    <property type="entry name" value="GcvT"/>
    <property type="match status" value="1"/>
</dbReference>
<dbReference type="SUPFAM" id="SSF101790">
    <property type="entry name" value="Aminomethyltransferase beta-barrel domain"/>
    <property type="match status" value="1"/>
</dbReference>
<dbReference type="SUPFAM" id="SSF103025">
    <property type="entry name" value="Folate-binding domain"/>
    <property type="match status" value="1"/>
</dbReference>
<proteinExistence type="inferred from homology"/>
<feature type="chain" id="PRO_0000122555" description="Aminomethyltransferase">
    <location>
        <begin position="1"/>
        <end position="364"/>
    </location>
</feature>
<sequence length="364" mass="40130">MAQQTPLYEQHTLCGARMVDFHGWMMPLHYGSQIDEHHAVRTDAGMFDVSHMTIVDLHGSRTREFLRYLLANDVAKLTKSGKALYSGMLNASGGVIDDLIVYYFTEDFFRLVVNSATREKDLSWITQHAEPFGIEITVRDDLSMIAVQGPNAQAKAATLFNDAQRQAVEGMKPFFGVQAGDLFIATTGYTGEAGYEIALPNEKAADFWRALVEAGVKPCGLGARDTLRLEAGMNLYSQEMDETISPLAANMGWTIAWEPADRDFIGREALEAQREHGTEKLVGLVMTEKGVLRNELPVRFTDAQGNQHEGIITSGTFSPTLGYSIALARVPEGIGETAIVQIRNREMPVKVTKPVFVRNGKAVA</sequence>
<organism>
    <name type="scientific">Escherichia coli O6:H1 (strain CFT073 / ATCC 700928 / UPEC)</name>
    <dbReference type="NCBI Taxonomy" id="199310"/>
    <lineage>
        <taxon>Bacteria</taxon>
        <taxon>Pseudomonadati</taxon>
        <taxon>Pseudomonadota</taxon>
        <taxon>Gammaproteobacteria</taxon>
        <taxon>Enterobacterales</taxon>
        <taxon>Enterobacteriaceae</taxon>
        <taxon>Escherichia</taxon>
    </lineage>
</organism>
<name>GCST_ECOL6</name>
<gene>
    <name evidence="1" type="primary">gcvT</name>
    <name type="ordered locus">c3485</name>
</gene>
<protein>
    <recommendedName>
        <fullName evidence="1">Aminomethyltransferase</fullName>
        <ecNumber evidence="1">2.1.2.10</ecNumber>
    </recommendedName>
    <alternativeName>
        <fullName evidence="1">Glycine cleavage system T protein</fullName>
    </alternativeName>
</protein>
<accession>Q8FE65</accession>